<proteinExistence type="evidence at protein level"/>
<keyword id="KW-0025">Alternative splicing</keyword>
<keyword id="KW-0963">Cytoplasm</keyword>
<keyword id="KW-0597">Phosphoprotein</keyword>
<keyword id="KW-1267">Proteomics identification</keyword>
<keyword id="KW-1185">Reference proteome</keyword>
<keyword id="KW-0677">Repeat</keyword>
<feature type="chain" id="PRO_0000281025" description="Myelin-associated oligodendrocyte basic protein">
    <location>
        <begin position="1"/>
        <end position="183"/>
    </location>
</feature>
<feature type="repeat" description="1">
    <location>
        <begin position="97"/>
        <end position="106"/>
    </location>
</feature>
<feature type="repeat" description="2">
    <location>
        <begin position="107"/>
        <end position="116"/>
    </location>
</feature>
<feature type="repeat" description="3">
    <location>
        <begin position="117"/>
        <end position="126"/>
    </location>
</feature>
<feature type="repeat" description="4">
    <location>
        <begin position="127"/>
        <end position="136"/>
    </location>
</feature>
<feature type="region of interest" description="Disordered" evidence="3">
    <location>
        <begin position="68"/>
        <end position="183"/>
    </location>
</feature>
<feature type="region of interest" description="4 X 10 AA tandem repeats of P-R-S-P-P-R-S-E-R-Q">
    <location>
        <begin position="97"/>
        <end position="136"/>
    </location>
</feature>
<feature type="compositionally biased region" description="Basic residues" evidence="3">
    <location>
        <begin position="69"/>
        <end position="78"/>
    </location>
</feature>
<feature type="compositionally biased region" description="Low complexity" evidence="3">
    <location>
        <begin position="79"/>
        <end position="96"/>
    </location>
</feature>
<feature type="compositionally biased region" description="Basic and acidic residues" evidence="3">
    <location>
        <begin position="101"/>
        <end position="143"/>
    </location>
</feature>
<feature type="compositionally biased region" description="Low complexity" evidence="3">
    <location>
        <begin position="151"/>
        <end position="164"/>
    </location>
</feature>
<feature type="modified residue" description="Phosphoserine" evidence="2">
    <location>
        <position position="99"/>
    </location>
</feature>
<feature type="modified residue" description="Phosphoserine" evidence="2">
    <location>
        <position position="109"/>
    </location>
</feature>
<feature type="splice variant" id="VSP_055152" description="In isoform 4." evidence="4">
    <original>T</original>
    <variation>TSSCQRRLSSRGEPWLPPPASFGPL</variation>
    <location>
        <position position="68"/>
    </location>
</feature>
<feature type="splice variant" id="VSP_023933" description="In isoform 3." evidence="5">
    <original>TSRRAKSPQRPK</original>
    <variation>LKRKIRPTPKKK</variation>
    <location>
        <begin position="70"/>
        <end position="81"/>
    </location>
</feature>
<feature type="splice variant" id="VSP_023934" description="In isoform 3." evidence="5">
    <location>
        <begin position="82"/>
        <end position="183"/>
    </location>
</feature>
<feature type="splice variant" id="VSP_023935" description="In isoform 2 and isoform 4." evidence="4 6">
    <location>
        <position position="183"/>
    </location>
</feature>
<feature type="sequence conflict" description="In Ref. 5; AAH75796." evidence="7" ref="5">
    <original>P</original>
    <variation>R</variation>
    <location>
        <position position="28"/>
    </location>
</feature>
<feature type="sequence conflict" description="In Ref. 2; AK127034." evidence="7" ref="2">
    <original>V</original>
    <variation>E</variation>
    <location>
        <position position="40"/>
    </location>
</feature>
<feature type="sequence conflict" description="In Ref. 1; BAA05660." evidence="7" ref="1">
    <original>S</original>
    <variation>P</variation>
    <location>
        <position position="76"/>
    </location>
</feature>
<sequence length="183" mass="20959">MSQKPAKEGPRLSKNQKYSEHFSIHCCPPFTFLNSKKEIVDRKYSICKSGCFYQKKEEDWICCACQKTRTSRRAKSPQRPKQQPAAPPAVVRAPAKPRSPPRSERQPRSPPRSERQPRSPPRSERQPRSPPRSERQPRPRPEVRPPPAKQRPPQKSKQQPRSSPLRGPGASRGGSPVKASRFW</sequence>
<dbReference type="EMBL" id="D28113">
    <property type="protein sequence ID" value="BAA05659.1"/>
    <property type="molecule type" value="mRNA"/>
</dbReference>
<dbReference type="EMBL" id="D28114">
    <property type="protein sequence ID" value="BAA05660.1"/>
    <property type="molecule type" value="mRNA"/>
</dbReference>
<dbReference type="EMBL" id="AK127034">
    <property type="status" value="NOT_ANNOTATED_CDS"/>
    <property type="molecule type" value="mRNA"/>
</dbReference>
<dbReference type="EMBL" id="AK290187">
    <property type="protein sequence ID" value="BAF82876.1"/>
    <property type="molecule type" value="mRNA"/>
</dbReference>
<dbReference type="EMBL" id="AC092058">
    <property type="status" value="NOT_ANNOTATED_CDS"/>
    <property type="molecule type" value="Genomic_DNA"/>
</dbReference>
<dbReference type="EMBL" id="CH471055">
    <property type="protein sequence ID" value="EAW64588.1"/>
    <property type="molecule type" value="Genomic_DNA"/>
</dbReference>
<dbReference type="EMBL" id="CH471055">
    <property type="protein sequence ID" value="EAW64592.1"/>
    <property type="molecule type" value="Genomic_DNA"/>
</dbReference>
<dbReference type="EMBL" id="BC022471">
    <property type="protein sequence ID" value="AAH22471.1"/>
    <property type="molecule type" value="mRNA"/>
</dbReference>
<dbReference type="EMBL" id="BC075796">
    <property type="protein sequence ID" value="AAH75796.1"/>
    <property type="molecule type" value="mRNA"/>
</dbReference>
<dbReference type="EMBL" id="BC119694">
    <property type="protein sequence ID" value="AAI19695.1"/>
    <property type="molecule type" value="mRNA"/>
</dbReference>
<dbReference type="EMBL" id="BC119695">
    <property type="protein sequence ID" value="AAI19696.1"/>
    <property type="molecule type" value="mRNA"/>
</dbReference>
<dbReference type="CCDS" id="CCDS2687.1">
    <molecule id="Q13875-3"/>
</dbReference>
<dbReference type="CCDS" id="CCDS2688.1">
    <molecule id="Q13875-1"/>
</dbReference>
<dbReference type="CCDS" id="CCDS63598.1">
    <molecule id="Q13875-4"/>
</dbReference>
<dbReference type="PIR" id="C55663">
    <property type="entry name" value="C55663"/>
</dbReference>
<dbReference type="RefSeq" id="NP_001265251.1">
    <molecule id="Q13875-4"/>
    <property type="nucleotide sequence ID" value="NM_001278322.2"/>
</dbReference>
<dbReference type="RefSeq" id="NP_001265252.1">
    <molecule id="Q13875-1"/>
    <property type="nucleotide sequence ID" value="NM_001278323.2"/>
</dbReference>
<dbReference type="RefSeq" id="NP_001380633.1">
    <molecule id="Q13875-1"/>
    <property type="nucleotide sequence ID" value="NM_001393704.1"/>
</dbReference>
<dbReference type="RefSeq" id="NP_891980.1">
    <molecule id="Q13875-3"/>
    <property type="nucleotide sequence ID" value="NM_182935.4"/>
</dbReference>
<dbReference type="SMR" id="Q13875"/>
<dbReference type="BioGRID" id="110479">
    <property type="interactions" value="23"/>
</dbReference>
<dbReference type="FunCoup" id="Q13875">
    <property type="interactions" value="13"/>
</dbReference>
<dbReference type="IntAct" id="Q13875">
    <property type="interactions" value="16"/>
</dbReference>
<dbReference type="STRING" id="9606.ENSP00000312293"/>
<dbReference type="iPTMnet" id="Q13875"/>
<dbReference type="PhosphoSitePlus" id="Q13875"/>
<dbReference type="SwissPalm" id="Q13875"/>
<dbReference type="BioMuta" id="MOBP"/>
<dbReference type="DMDM" id="134034171"/>
<dbReference type="MassIVE" id="Q13875"/>
<dbReference type="PeptideAtlas" id="Q13875"/>
<dbReference type="ProteomicsDB" id="33825"/>
<dbReference type="ProteomicsDB" id="59706">
    <molecule id="Q13875-1"/>
</dbReference>
<dbReference type="ProteomicsDB" id="59707">
    <molecule id="Q13875-2"/>
</dbReference>
<dbReference type="ProteomicsDB" id="59708">
    <molecule id="Q13875-3"/>
</dbReference>
<dbReference type="Antibodypedia" id="28962">
    <property type="antibodies" value="194 antibodies from 29 providers"/>
</dbReference>
<dbReference type="DNASU" id="4336"/>
<dbReference type="Ensembl" id="ENST00000311042.10">
    <molecule id="Q13875-4"/>
    <property type="protein sequence ID" value="ENSP00000312293.6"/>
    <property type="gene ID" value="ENSG00000168314.19"/>
</dbReference>
<dbReference type="Ensembl" id="ENST00000383754.7">
    <molecule id="Q13875-3"/>
    <property type="protein sequence ID" value="ENSP00000373261.3"/>
    <property type="gene ID" value="ENSG00000168314.19"/>
</dbReference>
<dbReference type="Ensembl" id="ENST00000415443.5">
    <molecule id="Q13875-3"/>
    <property type="protein sequence ID" value="ENSP00000388148.1"/>
    <property type="gene ID" value="ENSG00000168314.19"/>
</dbReference>
<dbReference type="Ensembl" id="ENST00000420739.5">
    <molecule id="Q13875-1"/>
    <property type="protein sequence ID" value="ENSP00000400491.1"/>
    <property type="gene ID" value="ENSG00000168314.19"/>
</dbReference>
<dbReference type="Ensembl" id="ENST00000424090.5">
    <molecule id="Q13875-1"/>
    <property type="protein sequence ID" value="ENSP00000389055.1"/>
    <property type="gene ID" value="ENSG00000168314.19"/>
</dbReference>
<dbReference type="Ensembl" id="ENST00000428261.5">
    <molecule id="Q13875-3"/>
    <property type="protein sequence ID" value="ENSP00000401312.1"/>
    <property type="gene ID" value="ENSG00000168314.19"/>
</dbReference>
<dbReference type="Ensembl" id="ENST00000441980.6">
    <molecule id="Q13875-1"/>
    <property type="protein sequence ID" value="ENSP00000388827.2"/>
    <property type="gene ID" value="ENSG00000168314.19"/>
</dbReference>
<dbReference type="Ensembl" id="ENST00000442631.5">
    <molecule id="Q13875-2"/>
    <property type="protein sequence ID" value="ENSP00000413771.1"/>
    <property type="gene ID" value="ENSG00000168314.19"/>
</dbReference>
<dbReference type="Ensembl" id="ENST00000447324.5">
    <molecule id="Q13875-3"/>
    <property type="protein sequence ID" value="ENSP00000409730.1"/>
    <property type="gene ID" value="ENSG00000168314.19"/>
</dbReference>
<dbReference type="Ensembl" id="ENST00000452959.6">
    <molecule id="Q13875-3"/>
    <property type="protein sequence ID" value="ENSP00000405549.1"/>
    <property type="gene ID" value="ENSG00000168314.19"/>
</dbReference>
<dbReference type="Ensembl" id="ENST00000682069.1">
    <molecule id="Q13875-1"/>
    <property type="protein sequence ID" value="ENSP00000506926.1"/>
    <property type="gene ID" value="ENSG00000168314.19"/>
</dbReference>
<dbReference type="Ensembl" id="ENST00000684792.1">
    <molecule id="Q13875-1"/>
    <property type="protein sequence ID" value="ENSP00000508923.1"/>
    <property type="gene ID" value="ENSG00000168314.19"/>
</dbReference>
<dbReference type="GeneID" id="4336"/>
<dbReference type="KEGG" id="hsa:4336"/>
<dbReference type="MANE-Select" id="ENST00000684792.1">
    <property type="protein sequence ID" value="ENSP00000508923.1"/>
    <property type="RefSeq nucleotide sequence ID" value="NM_001393704.1"/>
    <property type="RefSeq protein sequence ID" value="NP_001380633.1"/>
</dbReference>
<dbReference type="UCSC" id="uc003cju.5">
    <molecule id="Q13875-1"/>
    <property type="organism name" value="human"/>
</dbReference>
<dbReference type="AGR" id="HGNC:7189"/>
<dbReference type="CTD" id="4336"/>
<dbReference type="DisGeNET" id="4336"/>
<dbReference type="GeneCards" id="MOBP"/>
<dbReference type="HGNC" id="HGNC:7189">
    <property type="gene designation" value="MOBP"/>
</dbReference>
<dbReference type="HPA" id="ENSG00000168314">
    <property type="expression patterns" value="Tissue enriched (brain)"/>
</dbReference>
<dbReference type="MIM" id="600948">
    <property type="type" value="gene"/>
</dbReference>
<dbReference type="neXtProt" id="NX_Q13875"/>
<dbReference type="OpenTargets" id="ENSG00000168314"/>
<dbReference type="PharmGKB" id="PA30899"/>
<dbReference type="VEuPathDB" id="HostDB:ENSG00000168314"/>
<dbReference type="GeneTree" id="ENSGT00950000183138"/>
<dbReference type="HOGENOM" id="CLU_2855470_0_0_1"/>
<dbReference type="InParanoid" id="Q13875"/>
<dbReference type="OMA" id="KFTEHFS"/>
<dbReference type="OrthoDB" id="10072397at2759"/>
<dbReference type="PAN-GO" id="Q13875">
    <property type="GO annotations" value="3 GO annotations based on evolutionary models"/>
</dbReference>
<dbReference type="PhylomeDB" id="Q13875"/>
<dbReference type="PathwayCommons" id="Q13875"/>
<dbReference type="Reactome" id="R-HSA-8986944">
    <property type="pathway name" value="Transcriptional Regulation by MECP2"/>
</dbReference>
<dbReference type="SignaLink" id="Q13875"/>
<dbReference type="BioGRID-ORCS" id="4336">
    <property type="hits" value="8 hits in 1149 CRISPR screens"/>
</dbReference>
<dbReference type="ChiTaRS" id="MOBP">
    <property type="organism name" value="human"/>
</dbReference>
<dbReference type="GenomeRNAi" id="4336"/>
<dbReference type="Pharos" id="Q13875">
    <property type="development level" value="Tbio"/>
</dbReference>
<dbReference type="PRO" id="PR:Q13875"/>
<dbReference type="Proteomes" id="UP000005640">
    <property type="component" value="Chromosome 3"/>
</dbReference>
<dbReference type="RNAct" id="Q13875">
    <property type="molecule type" value="protein"/>
</dbReference>
<dbReference type="Bgee" id="ENSG00000168314">
    <property type="expression patterns" value="Expressed in C1 segment of cervical spinal cord and 145 other cell types or tissues"/>
</dbReference>
<dbReference type="ExpressionAtlas" id="Q13875">
    <property type="expression patterns" value="baseline and differential"/>
</dbReference>
<dbReference type="GO" id="GO:0005739">
    <property type="term" value="C:mitochondrion"/>
    <property type="evidence" value="ECO:0007669"/>
    <property type="project" value="Ensembl"/>
</dbReference>
<dbReference type="GO" id="GO:0048471">
    <property type="term" value="C:perinuclear region of cytoplasm"/>
    <property type="evidence" value="ECO:0007669"/>
    <property type="project" value="UniProtKB-SubCell"/>
</dbReference>
<dbReference type="GO" id="GO:0019911">
    <property type="term" value="F:structural constituent of myelin sheath"/>
    <property type="evidence" value="ECO:0007669"/>
    <property type="project" value="Ensembl"/>
</dbReference>
<dbReference type="GO" id="GO:0007399">
    <property type="term" value="P:nervous system development"/>
    <property type="evidence" value="ECO:0000304"/>
    <property type="project" value="ProtInc"/>
</dbReference>
<dbReference type="InterPro" id="IPR041282">
    <property type="entry name" value="FYVE_2"/>
</dbReference>
<dbReference type="InterPro" id="IPR051745">
    <property type="entry name" value="Intracell_Transport_Effector"/>
</dbReference>
<dbReference type="PANTHER" id="PTHR14555">
    <property type="entry name" value="MYELIN-ASSOCIATED OLIGODENDROCYTIC BASIC PROTEIN MOBP -RELATED"/>
    <property type="match status" value="1"/>
</dbReference>
<dbReference type="PANTHER" id="PTHR14555:SF6">
    <property type="entry name" value="RAB EFFECTOR MYRIP"/>
    <property type="match status" value="1"/>
</dbReference>
<dbReference type="Pfam" id="PF02318">
    <property type="entry name" value="FYVE_2"/>
    <property type="match status" value="1"/>
</dbReference>
<accession>Q13875</accession>
<accession>A8K2C2</accession>
<accession>G5E945</accession>
<accession>Q13874</accession>
<accession>Q6DHZ6</accession>
<accession>Q8TBJ1</accession>
<comment type="function">
    <text evidence="1">May play a role in compacting or stabilizing the myelin sheath, possibly by binding the negatively charged acidic phospholipids of the cytoplasmic membrane.</text>
</comment>
<comment type="interaction">
    <interactant intactId="EBI-10230628">
        <id>Q13875</id>
    </interactant>
    <interactant intactId="EBI-10171697">
        <id>Q6A162</id>
        <label>KRT40</label>
    </interactant>
    <organismsDiffer>false</organismsDiffer>
    <experiments>3</experiments>
</comment>
<comment type="interaction">
    <interactant intactId="EBI-10230628">
        <id>Q13875</id>
    </interactant>
    <interactant intactId="EBI-10172150">
        <id>P60370</id>
        <label>KRTAP10-5</label>
    </interactant>
    <organismsDiffer>false</organismsDiffer>
    <experiments>3</experiments>
</comment>
<comment type="interaction">
    <interactant intactId="EBI-10230628">
        <id>Q13875</id>
    </interactant>
    <interactant intactId="EBI-10172290">
        <id>P60409</id>
        <label>KRTAP10-7</label>
    </interactant>
    <organismsDiffer>false</organismsDiffer>
    <experiments>3</experiments>
</comment>
<comment type="interaction">
    <interactant intactId="EBI-10230628">
        <id>Q13875</id>
    </interactant>
    <interactant intactId="EBI-10171774">
        <id>P60410</id>
        <label>KRTAP10-8</label>
    </interactant>
    <organismsDiffer>false</organismsDiffer>
    <experiments>3</experiments>
</comment>
<comment type="interaction">
    <interactant intactId="EBI-10230628">
        <id>Q13875</id>
    </interactant>
    <interactant intactId="EBI-10172052">
        <id>P60411</id>
        <label>KRTAP10-9</label>
    </interactant>
    <organismsDiffer>false</organismsDiffer>
    <experiments>6</experiments>
</comment>
<comment type="interaction">
    <interactant intactId="EBI-10230628">
        <id>Q13875</id>
    </interactant>
    <interactant intactId="EBI-16439278">
        <id>Q6FHY5</id>
        <label>MEOX2</label>
    </interactant>
    <organismsDiffer>false</organismsDiffer>
    <experiments>3</experiments>
</comment>
<comment type="interaction">
    <interactant intactId="EBI-12013470">
        <id>Q13875-3</id>
    </interactant>
    <interactant intactId="EBI-12006120">
        <id>A0A087WZT3</id>
        <label>BOLA2-SMG1P6</label>
    </interactant>
    <organismsDiffer>false</organismsDiffer>
    <experiments>3</experiments>
</comment>
<comment type="interaction">
    <interactant intactId="EBI-12013470">
        <id>Q13875-3</id>
    </interactant>
    <interactant intactId="EBI-10217483">
        <id>P60412</id>
        <label>KRTAP10-11</label>
    </interactant>
    <organismsDiffer>false</organismsDiffer>
    <experiments>3</experiments>
</comment>
<comment type="interaction">
    <interactant intactId="EBI-12013470">
        <id>Q13875-3</id>
    </interactant>
    <interactant intactId="EBI-12012928">
        <id>P60371</id>
        <label>KRTAP10-6</label>
    </interactant>
    <organismsDiffer>false</organismsDiffer>
    <experiments>3</experiments>
</comment>
<comment type="interaction">
    <interactant intactId="EBI-12013470">
        <id>Q13875-3</id>
    </interactant>
    <interactant intactId="EBI-10172290">
        <id>P60409</id>
        <label>KRTAP10-7</label>
    </interactant>
    <organismsDiffer>false</organismsDiffer>
    <experiments>3</experiments>
</comment>
<comment type="interaction">
    <interactant intactId="EBI-12013470">
        <id>Q13875-3</id>
    </interactant>
    <interactant intactId="EBI-10171774">
        <id>P60410</id>
        <label>KRTAP10-8</label>
    </interactant>
    <organismsDiffer>false</organismsDiffer>
    <experiments>3</experiments>
</comment>
<comment type="interaction">
    <interactant intactId="EBI-12013470">
        <id>Q13875-3</id>
    </interactant>
    <interactant intactId="EBI-10172052">
        <id>P60411</id>
        <label>KRTAP10-9</label>
    </interactant>
    <organismsDiffer>false</organismsDiffer>
    <experiments>3</experiments>
</comment>
<comment type="interaction">
    <interactant intactId="EBI-12013470">
        <id>Q13875-3</id>
    </interactant>
    <interactant intactId="EBI-11953334">
        <id>P60328</id>
        <label>KRTAP12-3</label>
    </interactant>
    <organismsDiffer>false</organismsDiffer>
    <experiments>3</experiments>
</comment>
<comment type="interaction">
    <interactant intactId="EBI-12013470">
        <id>Q13875-3</id>
    </interactant>
    <interactant intactId="EBI-14065470">
        <id>Q9BYR9</id>
        <label>KRTAP2-4</label>
    </interactant>
    <organismsDiffer>false</organismsDiffer>
    <experiments>3</experiments>
</comment>
<comment type="interaction">
    <interactant intactId="EBI-12013470">
        <id>Q13875-3</id>
    </interactant>
    <interactant intactId="EBI-3958099">
        <id>P26371</id>
        <label>KRTAP5-9</label>
    </interactant>
    <organismsDiffer>false</organismsDiffer>
    <experiments>3</experiments>
</comment>
<comment type="interaction">
    <interactant intactId="EBI-12013470">
        <id>Q13875-3</id>
    </interactant>
    <interactant intactId="EBI-727004">
        <id>O00560</id>
        <label>SDCBP</label>
    </interactant>
    <organismsDiffer>false</organismsDiffer>
    <experiments>3</experiments>
</comment>
<comment type="interaction">
    <interactant intactId="EBI-12013470">
        <id>Q13875-3</id>
    </interactant>
    <interactant intactId="EBI-725997">
        <id>Q8WV44</id>
        <label>TRIM41</label>
    </interactant>
    <organismsDiffer>false</organismsDiffer>
    <experiments>3</experiments>
</comment>
<comment type="interaction">
    <interactant intactId="EBI-12013470">
        <id>Q13875-3</id>
    </interactant>
    <interactant intactId="EBI-5657766">
        <id>P17027</id>
        <label>ZNF23</label>
    </interactant>
    <organismsDiffer>false</organismsDiffer>
    <experiments>3</experiments>
</comment>
<comment type="subcellular location">
    <subcellularLocation>
        <location>Cytoplasm</location>
        <location>Perinuclear region</location>
    </subcellularLocation>
    <text evidence="1">Present in the major dense line of CNS myelin.</text>
</comment>
<comment type="alternative products">
    <event type="alternative splicing"/>
    <isoform>
        <id>Q13875-1</id>
        <name>1</name>
        <name>OPRP2</name>
        <sequence type="displayed"/>
    </isoform>
    <isoform>
        <id>Q13875-2</id>
        <name>2</name>
        <name>OPRP1</name>
        <sequence type="described" ref="VSP_023935"/>
    </isoform>
    <isoform>
        <id>Q13875-3</id>
        <name>3</name>
        <sequence type="described" ref="VSP_023933 VSP_023934"/>
    </isoform>
    <isoform>
        <id>Q13875-4</id>
        <name>4</name>
        <sequence type="described" ref="VSP_055152 VSP_023935"/>
    </isoform>
</comment>
<reference key="1">
    <citation type="journal article" date="1994" name="J. Biol. Chem.">
        <title>Cloning and expression of myelin-associated oligodendrocytic basic protein. A novel basic protein constituting the central nervous system myelin.</title>
        <authorList>
            <person name="Yamamoto Y."/>
            <person name="Mizuno R."/>
            <person name="Nishimura T."/>
            <person name="Ogawa Y."/>
            <person name="Yoshikawa H."/>
            <person name="Fujimura H."/>
            <person name="Adachi E."/>
            <person name="Kishimoto T."/>
            <person name="Yanagihara T."/>
            <person name="Sakoda S."/>
        </authorList>
    </citation>
    <scope>NUCLEOTIDE SEQUENCE [MRNA] (ISOFORMS 1 AND 2)</scope>
    <scope>ALTERNATIVE SPLICING</scope>
    <source>
        <tissue>Spinal cord</tissue>
    </source>
</reference>
<reference key="2">
    <citation type="journal article" date="2004" name="Nat. Genet.">
        <title>Complete sequencing and characterization of 21,243 full-length human cDNAs.</title>
        <authorList>
            <person name="Ota T."/>
            <person name="Suzuki Y."/>
            <person name="Nishikawa T."/>
            <person name="Otsuki T."/>
            <person name="Sugiyama T."/>
            <person name="Irie R."/>
            <person name="Wakamatsu A."/>
            <person name="Hayashi K."/>
            <person name="Sato H."/>
            <person name="Nagai K."/>
            <person name="Kimura K."/>
            <person name="Makita H."/>
            <person name="Sekine M."/>
            <person name="Obayashi M."/>
            <person name="Nishi T."/>
            <person name="Shibahara T."/>
            <person name="Tanaka T."/>
            <person name="Ishii S."/>
            <person name="Yamamoto J."/>
            <person name="Saito K."/>
            <person name="Kawai Y."/>
            <person name="Isono Y."/>
            <person name="Nakamura Y."/>
            <person name="Nagahari K."/>
            <person name="Murakami K."/>
            <person name="Yasuda T."/>
            <person name="Iwayanagi T."/>
            <person name="Wagatsuma M."/>
            <person name="Shiratori A."/>
            <person name="Sudo H."/>
            <person name="Hosoiri T."/>
            <person name="Kaku Y."/>
            <person name="Kodaira H."/>
            <person name="Kondo H."/>
            <person name="Sugawara M."/>
            <person name="Takahashi M."/>
            <person name="Kanda K."/>
            <person name="Yokoi T."/>
            <person name="Furuya T."/>
            <person name="Kikkawa E."/>
            <person name="Omura Y."/>
            <person name="Abe K."/>
            <person name="Kamihara K."/>
            <person name="Katsuta N."/>
            <person name="Sato K."/>
            <person name="Tanikawa M."/>
            <person name="Yamazaki M."/>
            <person name="Ninomiya K."/>
            <person name="Ishibashi T."/>
            <person name="Yamashita H."/>
            <person name="Murakawa K."/>
            <person name="Fujimori K."/>
            <person name="Tanai H."/>
            <person name="Kimata M."/>
            <person name="Watanabe M."/>
            <person name="Hiraoka S."/>
            <person name="Chiba Y."/>
            <person name="Ishida S."/>
            <person name="Ono Y."/>
            <person name="Takiguchi S."/>
            <person name="Watanabe S."/>
            <person name="Yosida M."/>
            <person name="Hotuta T."/>
            <person name="Kusano J."/>
            <person name="Kanehori K."/>
            <person name="Takahashi-Fujii A."/>
            <person name="Hara H."/>
            <person name="Tanase T.-O."/>
            <person name="Nomura Y."/>
            <person name="Togiya S."/>
            <person name="Komai F."/>
            <person name="Hara R."/>
            <person name="Takeuchi K."/>
            <person name="Arita M."/>
            <person name="Imose N."/>
            <person name="Musashino K."/>
            <person name="Yuuki H."/>
            <person name="Oshima A."/>
            <person name="Sasaki N."/>
            <person name="Aotsuka S."/>
            <person name="Yoshikawa Y."/>
            <person name="Matsunawa H."/>
            <person name="Ichihara T."/>
            <person name="Shiohata N."/>
            <person name="Sano S."/>
            <person name="Moriya S."/>
            <person name="Momiyama H."/>
            <person name="Satoh N."/>
            <person name="Takami S."/>
            <person name="Terashima Y."/>
            <person name="Suzuki O."/>
            <person name="Nakagawa S."/>
            <person name="Senoh A."/>
            <person name="Mizoguchi H."/>
            <person name="Goto Y."/>
            <person name="Shimizu F."/>
            <person name="Wakebe H."/>
            <person name="Hishigaki H."/>
            <person name="Watanabe T."/>
            <person name="Sugiyama A."/>
            <person name="Takemoto M."/>
            <person name="Kawakami B."/>
            <person name="Yamazaki M."/>
            <person name="Watanabe K."/>
            <person name="Kumagai A."/>
            <person name="Itakura S."/>
            <person name="Fukuzumi Y."/>
            <person name="Fujimori Y."/>
            <person name="Komiyama M."/>
            <person name="Tashiro H."/>
            <person name="Tanigami A."/>
            <person name="Fujiwara T."/>
            <person name="Ono T."/>
            <person name="Yamada K."/>
            <person name="Fujii Y."/>
            <person name="Ozaki K."/>
            <person name="Hirao M."/>
            <person name="Ohmori Y."/>
            <person name="Kawabata A."/>
            <person name="Hikiji T."/>
            <person name="Kobatake N."/>
            <person name="Inagaki H."/>
            <person name="Ikema Y."/>
            <person name="Okamoto S."/>
            <person name="Okitani R."/>
            <person name="Kawakami T."/>
            <person name="Noguchi S."/>
            <person name="Itoh T."/>
            <person name="Shigeta K."/>
            <person name="Senba T."/>
            <person name="Matsumura K."/>
            <person name="Nakajima Y."/>
            <person name="Mizuno T."/>
            <person name="Morinaga M."/>
            <person name="Sasaki M."/>
            <person name="Togashi T."/>
            <person name="Oyama M."/>
            <person name="Hata H."/>
            <person name="Watanabe M."/>
            <person name="Komatsu T."/>
            <person name="Mizushima-Sugano J."/>
            <person name="Satoh T."/>
            <person name="Shirai Y."/>
            <person name="Takahashi Y."/>
            <person name="Nakagawa K."/>
            <person name="Okumura K."/>
            <person name="Nagase T."/>
            <person name="Nomura N."/>
            <person name="Kikuchi H."/>
            <person name="Masuho Y."/>
            <person name="Yamashita R."/>
            <person name="Nakai K."/>
            <person name="Yada T."/>
            <person name="Nakamura Y."/>
            <person name="Ohara O."/>
            <person name="Isogai T."/>
            <person name="Sugano S."/>
        </authorList>
    </citation>
    <scope>NUCLEOTIDE SEQUENCE [LARGE SCALE MRNA] (ISOFORMS 2 AND 4)</scope>
    <source>
        <tissue>Thalamus</tissue>
    </source>
</reference>
<reference key="3">
    <citation type="journal article" date="2006" name="Nature">
        <title>The DNA sequence, annotation and analysis of human chromosome 3.</title>
        <authorList>
            <person name="Muzny D.M."/>
            <person name="Scherer S.E."/>
            <person name="Kaul R."/>
            <person name="Wang J."/>
            <person name="Yu J."/>
            <person name="Sudbrak R."/>
            <person name="Buhay C.J."/>
            <person name="Chen R."/>
            <person name="Cree A."/>
            <person name="Ding Y."/>
            <person name="Dugan-Rocha S."/>
            <person name="Gill R."/>
            <person name="Gunaratne P."/>
            <person name="Harris R.A."/>
            <person name="Hawes A.C."/>
            <person name="Hernandez J."/>
            <person name="Hodgson A.V."/>
            <person name="Hume J."/>
            <person name="Jackson A."/>
            <person name="Khan Z.M."/>
            <person name="Kovar-Smith C."/>
            <person name="Lewis L.R."/>
            <person name="Lozado R.J."/>
            <person name="Metzker M.L."/>
            <person name="Milosavljevic A."/>
            <person name="Miner G.R."/>
            <person name="Morgan M.B."/>
            <person name="Nazareth L.V."/>
            <person name="Scott G."/>
            <person name="Sodergren E."/>
            <person name="Song X.-Z."/>
            <person name="Steffen D."/>
            <person name="Wei S."/>
            <person name="Wheeler D.A."/>
            <person name="Wright M.W."/>
            <person name="Worley K.C."/>
            <person name="Yuan Y."/>
            <person name="Zhang Z."/>
            <person name="Adams C.Q."/>
            <person name="Ansari-Lari M.A."/>
            <person name="Ayele M."/>
            <person name="Brown M.J."/>
            <person name="Chen G."/>
            <person name="Chen Z."/>
            <person name="Clendenning J."/>
            <person name="Clerc-Blankenburg K.P."/>
            <person name="Chen R."/>
            <person name="Chen Z."/>
            <person name="Davis C."/>
            <person name="Delgado O."/>
            <person name="Dinh H.H."/>
            <person name="Dong W."/>
            <person name="Draper H."/>
            <person name="Ernst S."/>
            <person name="Fu G."/>
            <person name="Gonzalez-Garay M.L."/>
            <person name="Garcia D.K."/>
            <person name="Gillett W."/>
            <person name="Gu J."/>
            <person name="Hao B."/>
            <person name="Haugen E."/>
            <person name="Havlak P."/>
            <person name="He X."/>
            <person name="Hennig S."/>
            <person name="Hu S."/>
            <person name="Huang W."/>
            <person name="Jackson L.R."/>
            <person name="Jacob L.S."/>
            <person name="Kelly S.H."/>
            <person name="Kube M."/>
            <person name="Levy R."/>
            <person name="Li Z."/>
            <person name="Liu B."/>
            <person name="Liu J."/>
            <person name="Liu W."/>
            <person name="Lu J."/>
            <person name="Maheshwari M."/>
            <person name="Nguyen B.-V."/>
            <person name="Okwuonu G.O."/>
            <person name="Palmeiri A."/>
            <person name="Pasternak S."/>
            <person name="Perez L.M."/>
            <person name="Phelps K.A."/>
            <person name="Plopper F.J."/>
            <person name="Qiang B."/>
            <person name="Raymond C."/>
            <person name="Rodriguez R."/>
            <person name="Saenphimmachak C."/>
            <person name="Santibanez J."/>
            <person name="Shen H."/>
            <person name="Shen Y."/>
            <person name="Subramanian S."/>
            <person name="Tabor P.E."/>
            <person name="Verduzco D."/>
            <person name="Waldron L."/>
            <person name="Wang J."/>
            <person name="Wang J."/>
            <person name="Wang Q."/>
            <person name="Williams G.A."/>
            <person name="Wong G.K.-S."/>
            <person name="Yao Z."/>
            <person name="Zhang J."/>
            <person name="Zhang X."/>
            <person name="Zhao G."/>
            <person name="Zhou J."/>
            <person name="Zhou Y."/>
            <person name="Nelson D."/>
            <person name="Lehrach H."/>
            <person name="Reinhardt R."/>
            <person name="Naylor S.L."/>
            <person name="Yang H."/>
            <person name="Olson M."/>
            <person name="Weinstock G."/>
            <person name="Gibbs R.A."/>
        </authorList>
    </citation>
    <scope>NUCLEOTIDE SEQUENCE [LARGE SCALE GENOMIC DNA]</scope>
</reference>
<reference key="4">
    <citation type="submission" date="2005-07" db="EMBL/GenBank/DDBJ databases">
        <authorList>
            <person name="Mural R.J."/>
            <person name="Istrail S."/>
            <person name="Sutton G.G."/>
            <person name="Florea L."/>
            <person name="Halpern A.L."/>
            <person name="Mobarry C.M."/>
            <person name="Lippert R."/>
            <person name="Walenz B."/>
            <person name="Shatkay H."/>
            <person name="Dew I."/>
            <person name="Miller J.R."/>
            <person name="Flanigan M.J."/>
            <person name="Edwards N.J."/>
            <person name="Bolanos R."/>
            <person name="Fasulo D."/>
            <person name="Halldorsson B.V."/>
            <person name="Hannenhalli S."/>
            <person name="Turner R."/>
            <person name="Yooseph S."/>
            <person name="Lu F."/>
            <person name="Nusskern D.R."/>
            <person name="Shue B.C."/>
            <person name="Zheng X.H."/>
            <person name="Zhong F."/>
            <person name="Delcher A.L."/>
            <person name="Huson D.H."/>
            <person name="Kravitz S.A."/>
            <person name="Mouchard L."/>
            <person name="Reinert K."/>
            <person name="Remington K.A."/>
            <person name="Clark A.G."/>
            <person name="Waterman M.S."/>
            <person name="Eichler E.E."/>
            <person name="Adams M.D."/>
            <person name="Hunkapiller M.W."/>
            <person name="Myers E.W."/>
            <person name="Venter J.C."/>
        </authorList>
    </citation>
    <scope>NUCLEOTIDE SEQUENCE [LARGE SCALE GENOMIC DNA]</scope>
</reference>
<reference key="5">
    <citation type="journal article" date="2004" name="Genome Res.">
        <title>The status, quality, and expansion of the NIH full-length cDNA project: the Mammalian Gene Collection (MGC).</title>
        <authorList>
            <consortium name="The MGC Project Team"/>
        </authorList>
    </citation>
    <scope>NUCLEOTIDE SEQUENCE [LARGE SCALE MRNA] (ISOFORM 3)</scope>
    <source>
        <tissue>Brain</tissue>
    </source>
</reference>
<name>MOBP_HUMAN</name>
<evidence type="ECO:0000250" key="1"/>
<evidence type="ECO:0000250" key="2">
    <source>
        <dbReference type="UniProtKB" id="Q63327"/>
    </source>
</evidence>
<evidence type="ECO:0000256" key="3">
    <source>
        <dbReference type="SAM" id="MobiDB-lite"/>
    </source>
</evidence>
<evidence type="ECO:0000303" key="4">
    <source>
    </source>
</evidence>
<evidence type="ECO:0000303" key="5">
    <source>
    </source>
</evidence>
<evidence type="ECO:0000303" key="6">
    <source>
    </source>
</evidence>
<evidence type="ECO:0000305" key="7"/>
<organism>
    <name type="scientific">Homo sapiens</name>
    <name type="common">Human</name>
    <dbReference type="NCBI Taxonomy" id="9606"/>
    <lineage>
        <taxon>Eukaryota</taxon>
        <taxon>Metazoa</taxon>
        <taxon>Chordata</taxon>
        <taxon>Craniata</taxon>
        <taxon>Vertebrata</taxon>
        <taxon>Euteleostomi</taxon>
        <taxon>Mammalia</taxon>
        <taxon>Eutheria</taxon>
        <taxon>Euarchontoglires</taxon>
        <taxon>Primates</taxon>
        <taxon>Haplorrhini</taxon>
        <taxon>Catarrhini</taxon>
        <taxon>Hominidae</taxon>
        <taxon>Homo</taxon>
    </lineage>
</organism>
<protein>
    <recommendedName>
        <fullName>Myelin-associated oligodendrocyte basic protein</fullName>
    </recommendedName>
</protein>
<gene>
    <name type="primary">MOBP</name>
</gene>